<organism>
    <name type="scientific">Bifidobacterium adolescentis (strain ATCC 15703 / DSM 20083 / NCTC 11814 / E194a)</name>
    <dbReference type="NCBI Taxonomy" id="367928"/>
    <lineage>
        <taxon>Bacteria</taxon>
        <taxon>Bacillati</taxon>
        <taxon>Actinomycetota</taxon>
        <taxon>Actinomycetes</taxon>
        <taxon>Bifidobacteriales</taxon>
        <taxon>Bifidobacteriaceae</taxon>
        <taxon>Bifidobacterium</taxon>
    </lineage>
</organism>
<feature type="chain" id="PRO_1000002401" description="Holliday junction branch migration complex subunit RuvA">
    <location>
        <begin position="1"/>
        <end position="205"/>
    </location>
</feature>
<feature type="region of interest" description="Domain I" evidence="1">
    <location>
        <begin position="1"/>
        <end position="63"/>
    </location>
</feature>
<feature type="region of interest" description="Domain II" evidence="1">
    <location>
        <begin position="64"/>
        <end position="142"/>
    </location>
</feature>
<feature type="region of interest" description="Flexible linker" evidence="1">
    <location>
        <begin position="143"/>
        <end position="145"/>
    </location>
</feature>
<feature type="region of interest" description="Domain III" evidence="1">
    <location>
        <begin position="146"/>
        <end position="205"/>
    </location>
</feature>
<keyword id="KW-0963">Cytoplasm</keyword>
<keyword id="KW-0227">DNA damage</keyword>
<keyword id="KW-0233">DNA recombination</keyword>
<keyword id="KW-0234">DNA repair</keyword>
<keyword id="KW-0238">DNA-binding</keyword>
<keyword id="KW-1185">Reference proteome</keyword>
<protein>
    <recommendedName>
        <fullName evidence="1">Holliday junction branch migration complex subunit RuvA</fullName>
    </recommendedName>
</protein>
<evidence type="ECO:0000255" key="1">
    <source>
        <dbReference type="HAMAP-Rule" id="MF_00031"/>
    </source>
</evidence>
<reference key="1">
    <citation type="submission" date="2006-12" db="EMBL/GenBank/DDBJ databases">
        <title>Bifidobacterium adolescentis complete genome sequence.</title>
        <authorList>
            <person name="Suzuki T."/>
            <person name="Tsuda Y."/>
            <person name="Kanou N."/>
            <person name="Inoue T."/>
            <person name="Kumazaki K."/>
            <person name="Nagano S."/>
            <person name="Hirai S."/>
            <person name="Tanaka K."/>
            <person name="Watanabe K."/>
        </authorList>
    </citation>
    <scope>NUCLEOTIDE SEQUENCE [LARGE SCALE GENOMIC DNA]</scope>
    <source>
        <strain>ATCC 15703 / DSM 20083 / NCTC 11814 / E194a</strain>
    </source>
</reference>
<gene>
    <name evidence="1" type="primary">ruvA</name>
    <name type="ordered locus">BAD_0804</name>
</gene>
<accession>A1A1K2</accession>
<name>RUVA_BIFAA</name>
<sequence>MIGMLRGHVESVDAVSAIIEVGGVGYEVRMPSADLASMHAGQEIKVYTSLNVSQDAITLFGFGTLASKRMFLQLQKVSGIGPKVALSLLSTLPPDRLARAVADGDATALAKAPGLGKKGAQKIILELKGSIDLSQIEGSSATASTPEDTGAEQVVEGLMSLGWHQQDAAHAVQTVCADNQIETPLNAKDVPRVLKLALTSLDRGR</sequence>
<proteinExistence type="inferred from homology"/>
<comment type="function">
    <text evidence="1">The RuvA-RuvB-RuvC complex processes Holliday junction (HJ) DNA during genetic recombination and DNA repair, while the RuvA-RuvB complex plays an important role in the rescue of blocked DNA replication forks via replication fork reversal (RFR). RuvA specifically binds to HJ cruciform DNA, conferring on it an open structure. The RuvB hexamer acts as an ATP-dependent pump, pulling dsDNA into and through the RuvAB complex. HJ branch migration allows RuvC to scan DNA until it finds its consensus sequence, where it cleaves and resolves the cruciform DNA.</text>
</comment>
<comment type="subunit">
    <text evidence="1">Homotetramer. Forms an RuvA(8)-RuvB(12)-Holliday junction (HJ) complex. HJ DNA is sandwiched between 2 RuvA tetramers; dsDNA enters through RuvA and exits via RuvB. An RuvB hexamer assembles on each DNA strand where it exits the tetramer. Each RuvB hexamer is contacted by two RuvA subunits (via domain III) on 2 adjacent RuvB subunits; this complex drives branch migration. In the full resolvosome a probable DNA-RuvA(4)-RuvB(12)-RuvC(2) complex forms which resolves the HJ.</text>
</comment>
<comment type="subcellular location">
    <subcellularLocation>
        <location evidence="1">Cytoplasm</location>
    </subcellularLocation>
</comment>
<comment type="domain">
    <text evidence="1">Has three domains with a flexible linker between the domains II and III and assumes an 'L' shape. Domain III is highly mobile and contacts RuvB.</text>
</comment>
<comment type="similarity">
    <text evidence="1">Belongs to the RuvA family.</text>
</comment>
<dbReference type="EMBL" id="AP009256">
    <property type="protein sequence ID" value="BAF39585.1"/>
    <property type="molecule type" value="Genomic_DNA"/>
</dbReference>
<dbReference type="RefSeq" id="WP_011743179.1">
    <property type="nucleotide sequence ID" value="NC_008618.1"/>
</dbReference>
<dbReference type="SMR" id="A1A1K2"/>
<dbReference type="STRING" id="367928.BAD_0804"/>
<dbReference type="PaxDb" id="1680-BADO_0853"/>
<dbReference type="GeneID" id="4556701"/>
<dbReference type="KEGG" id="bad:BAD_0804"/>
<dbReference type="HOGENOM" id="CLU_087936_2_1_11"/>
<dbReference type="Proteomes" id="UP000008702">
    <property type="component" value="Chromosome"/>
</dbReference>
<dbReference type="GO" id="GO:0005737">
    <property type="term" value="C:cytoplasm"/>
    <property type="evidence" value="ECO:0007669"/>
    <property type="project" value="UniProtKB-SubCell"/>
</dbReference>
<dbReference type="GO" id="GO:0009379">
    <property type="term" value="C:Holliday junction helicase complex"/>
    <property type="evidence" value="ECO:0007669"/>
    <property type="project" value="InterPro"/>
</dbReference>
<dbReference type="GO" id="GO:0048476">
    <property type="term" value="C:Holliday junction resolvase complex"/>
    <property type="evidence" value="ECO:0007669"/>
    <property type="project" value="UniProtKB-UniRule"/>
</dbReference>
<dbReference type="GO" id="GO:0005524">
    <property type="term" value="F:ATP binding"/>
    <property type="evidence" value="ECO:0007669"/>
    <property type="project" value="InterPro"/>
</dbReference>
<dbReference type="GO" id="GO:0000400">
    <property type="term" value="F:four-way junction DNA binding"/>
    <property type="evidence" value="ECO:0007669"/>
    <property type="project" value="UniProtKB-UniRule"/>
</dbReference>
<dbReference type="GO" id="GO:0009378">
    <property type="term" value="F:four-way junction helicase activity"/>
    <property type="evidence" value="ECO:0007669"/>
    <property type="project" value="InterPro"/>
</dbReference>
<dbReference type="GO" id="GO:0006310">
    <property type="term" value="P:DNA recombination"/>
    <property type="evidence" value="ECO:0007669"/>
    <property type="project" value="UniProtKB-UniRule"/>
</dbReference>
<dbReference type="GO" id="GO:0006281">
    <property type="term" value="P:DNA repair"/>
    <property type="evidence" value="ECO:0007669"/>
    <property type="project" value="UniProtKB-UniRule"/>
</dbReference>
<dbReference type="CDD" id="cd14332">
    <property type="entry name" value="UBA_RuvA_C"/>
    <property type="match status" value="1"/>
</dbReference>
<dbReference type="Gene3D" id="1.10.150.20">
    <property type="entry name" value="5' to 3' exonuclease, C-terminal subdomain"/>
    <property type="match status" value="1"/>
</dbReference>
<dbReference type="Gene3D" id="1.10.8.10">
    <property type="entry name" value="DNA helicase RuvA subunit, C-terminal domain"/>
    <property type="match status" value="1"/>
</dbReference>
<dbReference type="Gene3D" id="2.40.50.140">
    <property type="entry name" value="Nucleic acid-binding proteins"/>
    <property type="match status" value="1"/>
</dbReference>
<dbReference type="HAMAP" id="MF_00031">
    <property type="entry name" value="DNA_HJ_migration_RuvA"/>
    <property type="match status" value="1"/>
</dbReference>
<dbReference type="InterPro" id="IPR013849">
    <property type="entry name" value="DNA_helicase_Holl-junc_RuvA_I"/>
</dbReference>
<dbReference type="InterPro" id="IPR003583">
    <property type="entry name" value="Hlx-hairpin-Hlx_DNA-bd_motif"/>
</dbReference>
<dbReference type="InterPro" id="IPR012340">
    <property type="entry name" value="NA-bd_OB-fold"/>
</dbReference>
<dbReference type="InterPro" id="IPR000085">
    <property type="entry name" value="RuvA"/>
</dbReference>
<dbReference type="InterPro" id="IPR010994">
    <property type="entry name" value="RuvA_2-like"/>
</dbReference>
<dbReference type="InterPro" id="IPR011114">
    <property type="entry name" value="RuvA_C"/>
</dbReference>
<dbReference type="InterPro" id="IPR036267">
    <property type="entry name" value="RuvA_C_sf"/>
</dbReference>
<dbReference type="NCBIfam" id="TIGR00084">
    <property type="entry name" value="ruvA"/>
    <property type="match status" value="1"/>
</dbReference>
<dbReference type="Pfam" id="PF14520">
    <property type="entry name" value="HHH_5"/>
    <property type="match status" value="1"/>
</dbReference>
<dbReference type="Pfam" id="PF07499">
    <property type="entry name" value="RuvA_C"/>
    <property type="match status" value="1"/>
</dbReference>
<dbReference type="Pfam" id="PF01330">
    <property type="entry name" value="RuvA_N"/>
    <property type="match status" value="1"/>
</dbReference>
<dbReference type="SMART" id="SM00278">
    <property type="entry name" value="HhH1"/>
    <property type="match status" value="2"/>
</dbReference>
<dbReference type="SUPFAM" id="SSF46929">
    <property type="entry name" value="DNA helicase RuvA subunit, C-terminal domain"/>
    <property type="match status" value="1"/>
</dbReference>
<dbReference type="SUPFAM" id="SSF50249">
    <property type="entry name" value="Nucleic acid-binding proteins"/>
    <property type="match status" value="1"/>
</dbReference>
<dbReference type="SUPFAM" id="SSF47781">
    <property type="entry name" value="RuvA domain 2-like"/>
    <property type="match status" value="1"/>
</dbReference>